<feature type="chain" id="PRO_0000210246" description="Syntaxin-121">
    <location>
        <begin position="1"/>
        <end position="346"/>
    </location>
</feature>
<feature type="topological domain" description="Cytoplasmic" evidence="2">
    <location>
        <begin position="1"/>
        <end position="285"/>
    </location>
</feature>
<feature type="transmembrane region" description="Helical; Anchor for type IV membrane protein" evidence="2">
    <location>
        <begin position="286"/>
        <end position="306"/>
    </location>
</feature>
<feature type="topological domain" description="Vesicular" evidence="2">
    <location>
        <begin position="307"/>
        <end position="346"/>
    </location>
</feature>
<feature type="domain" description="t-SNARE coiled-coil homology" evidence="3">
    <location>
        <begin position="214"/>
        <end position="276"/>
    </location>
</feature>
<feature type="region of interest" description="Disordered" evidence="4">
    <location>
        <begin position="1"/>
        <end position="41"/>
    </location>
</feature>
<feature type="region of interest" description="Disordered" evidence="4">
    <location>
        <begin position="314"/>
        <end position="346"/>
    </location>
</feature>
<feature type="coiled-coil region" evidence="2">
    <location>
        <begin position="41"/>
        <end position="76"/>
    </location>
</feature>
<feature type="compositionally biased region" description="Low complexity" evidence="4">
    <location>
        <begin position="1"/>
        <end position="12"/>
    </location>
</feature>
<feature type="compositionally biased region" description="Gly residues" evidence="4">
    <location>
        <begin position="314"/>
        <end position="326"/>
    </location>
</feature>
<feature type="modified residue" description="N-acetylmethionine" evidence="15">
    <location>
        <position position="1"/>
    </location>
</feature>
<feature type="splice variant" id="VSP_057947" description="In isoform 2." evidence="12">
    <location>
        <begin position="1"/>
        <end position="31"/>
    </location>
</feature>
<feature type="initiator methionine" description="Removed" evidence="15">
    <location sequence="Q9ZSD4-2">
        <position position="1"/>
    </location>
</feature>
<feature type="modified residue" description="N-acetylalanine" evidence="15">
    <location sequence="Q9ZSD4-2">
        <position position="2"/>
    </location>
</feature>
<accession>Q9ZSD4</accession>
<accession>F4J7G9</accession>
<organism>
    <name type="scientific">Arabidopsis thaliana</name>
    <name type="common">Mouse-ear cress</name>
    <dbReference type="NCBI Taxonomy" id="3702"/>
    <lineage>
        <taxon>Eukaryota</taxon>
        <taxon>Viridiplantae</taxon>
        <taxon>Streptophyta</taxon>
        <taxon>Embryophyta</taxon>
        <taxon>Tracheophyta</taxon>
        <taxon>Spermatophyta</taxon>
        <taxon>Magnoliopsida</taxon>
        <taxon>eudicotyledons</taxon>
        <taxon>Gunneridae</taxon>
        <taxon>Pentapetalae</taxon>
        <taxon>rosids</taxon>
        <taxon>malvids</taxon>
        <taxon>Brassicales</taxon>
        <taxon>Brassicaceae</taxon>
        <taxon>Camelineae</taxon>
        <taxon>Arabidopsis</taxon>
    </lineage>
</organism>
<reference key="1">
    <citation type="journal article" date="1999" name="Science">
        <title>A tobacco syntaxin with a role in hormonal control of guard cell ion channels.</title>
        <authorList>
            <person name="Leyman B."/>
            <person name="Geelen D."/>
            <person name="Quintero F.J."/>
            <person name="Blatt M.R."/>
        </authorList>
    </citation>
    <scope>NUCLEOTIDE SEQUENCE [MRNA] (ISOFORM 1)</scope>
    <source>
        <strain>cv. Columbia</strain>
    </source>
</reference>
<reference key="2">
    <citation type="journal article" date="2000" name="Nature">
        <title>Sequence and analysis of chromosome 3 of the plant Arabidopsis thaliana.</title>
        <authorList>
            <person name="Salanoubat M."/>
            <person name="Lemcke K."/>
            <person name="Rieger M."/>
            <person name="Ansorge W."/>
            <person name="Unseld M."/>
            <person name="Fartmann B."/>
            <person name="Valle G."/>
            <person name="Bloecker H."/>
            <person name="Perez-Alonso M."/>
            <person name="Obermaier B."/>
            <person name="Delseny M."/>
            <person name="Boutry M."/>
            <person name="Grivell L.A."/>
            <person name="Mache R."/>
            <person name="Puigdomenech P."/>
            <person name="De Simone V."/>
            <person name="Choisne N."/>
            <person name="Artiguenave F."/>
            <person name="Robert C."/>
            <person name="Brottier P."/>
            <person name="Wincker P."/>
            <person name="Cattolico L."/>
            <person name="Weissenbach J."/>
            <person name="Saurin W."/>
            <person name="Quetier F."/>
            <person name="Schaefer M."/>
            <person name="Mueller-Auer S."/>
            <person name="Gabel C."/>
            <person name="Fuchs M."/>
            <person name="Benes V."/>
            <person name="Wurmbach E."/>
            <person name="Drzonek H."/>
            <person name="Erfle H."/>
            <person name="Jordan N."/>
            <person name="Bangert S."/>
            <person name="Wiedelmann R."/>
            <person name="Kranz H."/>
            <person name="Voss H."/>
            <person name="Holland R."/>
            <person name="Brandt P."/>
            <person name="Nyakatura G."/>
            <person name="Vezzi A."/>
            <person name="D'Angelo M."/>
            <person name="Pallavicini A."/>
            <person name="Toppo S."/>
            <person name="Simionati B."/>
            <person name="Conrad A."/>
            <person name="Hornischer K."/>
            <person name="Kauer G."/>
            <person name="Loehnert T.-H."/>
            <person name="Nordsiek G."/>
            <person name="Reichelt J."/>
            <person name="Scharfe M."/>
            <person name="Schoen O."/>
            <person name="Bargues M."/>
            <person name="Terol J."/>
            <person name="Climent J."/>
            <person name="Navarro P."/>
            <person name="Collado C."/>
            <person name="Perez-Perez A."/>
            <person name="Ottenwaelder B."/>
            <person name="Duchemin D."/>
            <person name="Cooke R."/>
            <person name="Laudie M."/>
            <person name="Berger-Llauro C."/>
            <person name="Purnelle B."/>
            <person name="Masuy D."/>
            <person name="de Haan M."/>
            <person name="Maarse A.C."/>
            <person name="Alcaraz J.-P."/>
            <person name="Cottet A."/>
            <person name="Casacuberta E."/>
            <person name="Monfort A."/>
            <person name="Argiriou A."/>
            <person name="Flores M."/>
            <person name="Liguori R."/>
            <person name="Vitale D."/>
            <person name="Mannhaupt G."/>
            <person name="Haase D."/>
            <person name="Schoof H."/>
            <person name="Rudd S."/>
            <person name="Zaccaria P."/>
            <person name="Mewes H.-W."/>
            <person name="Mayer K.F.X."/>
            <person name="Kaul S."/>
            <person name="Town C.D."/>
            <person name="Koo H.L."/>
            <person name="Tallon L.J."/>
            <person name="Jenkins J."/>
            <person name="Rooney T."/>
            <person name="Rizzo M."/>
            <person name="Walts A."/>
            <person name="Utterback T."/>
            <person name="Fujii C.Y."/>
            <person name="Shea T.P."/>
            <person name="Creasy T.H."/>
            <person name="Haas B."/>
            <person name="Maiti R."/>
            <person name="Wu D."/>
            <person name="Peterson J."/>
            <person name="Van Aken S."/>
            <person name="Pai G."/>
            <person name="Militscher J."/>
            <person name="Sellers P."/>
            <person name="Gill J.E."/>
            <person name="Feldblyum T.V."/>
            <person name="Preuss D."/>
            <person name="Lin X."/>
            <person name="Nierman W.C."/>
            <person name="Salzberg S.L."/>
            <person name="White O."/>
            <person name="Venter J.C."/>
            <person name="Fraser C.M."/>
            <person name="Kaneko T."/>
            <person name="Nakamura Y."/>
            <person name="Sato S."/>
            <person name="Kato T."/>
            <person name="Asamizu E."/>
            <person name="Sasamoto S."/>
            <person name="Kimura T."/>
            <person name="Idesawa K."/>
            <person name="Kawashima K."/>
            <person name="Kishida Y."/>
            <person name="Kiyokawa C."/>
            <person name="Kohara M."/>
            <person name="Matsumoto M."/>
            <person name="Matsuno A."/>
            <person name="Muraki A."/>
            <person name="Nakayama S."/>
            <person name="Nakazaki N."/>
            <person name="Shinpo S."/>
            <person name="Takeuchi C."/>
            <person name="Wada T."/>
            <person name="Watanabe A."/>
            <person name="Yamada M."/>
            <person name="Yasuda M."/>
            <person name="Tabata S."/>
        </authorList>
    </citation>
    <scope>NUCLEOTIDE SEQUENCE [LARGE SCALE GENOMIC DNA]</scope>
    <source>
        <strain>cv. Columbia</strain>
    </source>
</reference>
<reference key="3">
    <citation type="journal article" date="2017" name="Plant J.">
        <title>Araport11: a complete reannotation of the Arabidopsis thaliana reference genome.</title>
        <authorList>
            <person name="Cheng C.Y."/>
            <person name="Krishnakumar V."/>
            <person name="Chan A.P."/>
            <person name="Thibaud-Nissen F."/>
            <person name="Schobel S."/>
            <person name="Town C.D."/>
        </authorList>
    </citation>
    <scope>GENOME REANNOTATION</scope>
    <source>
        <strain>cv. Columbia</strain>
    </source>
</reference>
<reference key="4">
    <citation type="journal article" date="2003" name="Science">
        <title>Empirical analysis of transcriptional activity in the Arabidopsis genome.</title>
        <authorList>
            <person name="Yamada K."/>
            <person name="Lim J."/>
            <person name="Dale J.M."/>
            <person name="Chen H."/>
            <person name="Shinn P."/>
            <person name="Palm C.J."/>
            <person name="Southwick A.M."/>
            <person name="Wu H.C."/>
            <person name="Kim C.J."/>
            <person name="Nguyen M."/>
            <person name="Pham P.K."/>
            <person name="Cheuk R.F."/>
            <person name="Karlin-Newmann G."/>
            <person name="Liu S.X."/>
            <person name="Lam B."/>
            <person name="Sakano H."/>
            <person name="Wu T."/>
            <person name="Yu G."/>
            <person name="Miranda M."/>
            <person name="Quach H.L."/>
            <person name="Tripp M."/>
            <person name="Chang C.H."/>
            <person name="Lee J.M."/>
            <person name="Toriumi M.J."/>
            <person name="Chan M.M."/>
            <person name="Tang C.C."/>
            <person name="Onodera C.S."/>
            <person name="Deng J.M."/>
            <person name="Akiyama K."/>
            <person name="Ansari Y."/>
            <person name="Arakawa T."/>
            <person name="Banh J."/>
            <person name="Banno F."/>
            <person name="Bowser L."/>
            <person name="Brooks S.Y."/>
            <person name="Carninci P."/>
            <person name="Chao Q."/>
            <person name="Choy N."/>
            <person name="Enju A."/>
            <person name="Goldsmith A.D."/>
            <person name="Gurjal M."/>
            <person name="Hansen N.F."/>
            <person name="Hayashizaki Y."/>
            <person name="Johnson-Hopson C."/>
            <person name="Hsuan V.W."/>
            <person name="Iida K."/>
            <person name="Karnes M."/>
            <person name="Khan S."/>
            <person name="Koesema E."/>
            <person name="Ishida J."/>
            <person name="Jiang P.X."/>
            <person name="Jones T."/>
            <person name="Kawai J."/>
            <person name="Kamiya A."/>
            <person name="Meyers C."/>
            <person name="Nakajima M."/>
            <person name="Narusaka M."/>
            <person name="Seki M."/>
            <person name="Sakurai T."/>
            <person name="Satou M."/>
            <person name="Tamse R."/>
            <person name="Vaysberg M."/>
            <person name="Wallender E.K."/>
            <person name="Wong C."/>
            <person name="Yamamura Y."/>
            <person name="Yuan S."/>
            <person name="Shinozaki K."/>
            <person name="Davis R.W."/>
            <person name="Theologis A."/>
            <person name="Ecker J.R."/>
        </authorList>
    </citation>
    <scope>NUCLEOTIDE SEQUENCE [LARGE SCALE MRNA] (ISOFORM 2)</scope>
    <source>
        <strain>cv. Columbia</strain>
    </source>
</reference>
<reference key="5">
    <citation type="submission" date="2002-03" db="EMBL/GenBank/DDBJ databases">
        <title>Full-length cDNA from Arabidopsis thaliana.</title>
        <authorList>
            <person name="Brover V.V."/>
            <person name="Troukhan M.E."/>
            <person name="Alexandrov N.A."/>
            <person name="Lu Y.-P."/>
            <person name="Flavell R.B."/>
            <person name="Feldmann K.A."/>
        </authorList>
    </citation>
    <scope>NUCLEOTIDE SEQUENCE [LARGE SCALE MRNA] (ISOFORM 2)</scope>
</reference>
<reference key="6">
    <citation type="journal article" date="2001" name="FEBS Lett.">
        <title>Protein-binding partners of the tobacco syntaxin NtSyr1.</title>
        <authorList>
            <person name="Kargul J."/>
            <person name="Gansel X."/>
            <person name="Tyrrell M."/>
            <person name="Sticher L."/>
            <person name="Blatt M.R."/>
        </authorList>
    </citation>
    <scope>INTERACTION WITH SNAP33</scope>
</reference>
<reference key="7">
    <citation type="journal article" date="2004" name="Cell Struct. Funct.">
        <title>Systematic analysis of SNARE molecules in Arabidopsis: dissection of the post-Golgi network in plant cells.</title>
        <authorList>
            <person name="Uemura T."/>
            <person name="Ueda T."/>
            <person name="Ohniwa R.L."/>
            <person name="Nakano A."/>
            <person name="Takeyasu K."/>
            <person name="Sato M.H."/>
        </authorList>
    </citation>
    <scope>SUBCELLULAR LOCATION</scope>
    <scope>TISSUE SPECIFICITY</scope>
</reference>
<reference key="8">
    <citation type="journal article" date="2004" name="Mol. Cell. Proteomics">
        <title>Identification of new intrinsic proteins in Arabidopsis plasma membrane proteome.</title>
        <authorList>
            <person name="Marmagne A."/>
            <person name="Rouet M.-A."/>
            <person name="Ferro M."/>
            <person name="Rolland N."/>
            <person name="Alcon C."/>
            <person name="Joyard J."/>
            <person name="Garin J."/>
            <person name="Barbier-Brygoo H."/>
            <person name="Ephritikhine G."/>
        </authorList>
    </citation>
    <scope>IDENTIFICATION BY MASS SPECTROMETRY</scope>
    <scope>SUBCELLULAR LOCATION [LARGE SCALE ANALYSIS]</scope>
</reference>
<reference key="9">
    <citation type="journal article" date="2009" name="Plant Physiol.">
        <title>Large-scale Arabidopsis phosphoproteome profiling reveals novel chloroplast kinase substrates and phosphorylation networks.</title>
        <authorList>
            <person name="Reiland S."/>
            <person name="Messerli G."/>
            <person name="Baerenfaller K."/>
            <person name="Gerrits B."/>
            <person name="Endler A."/>
            <person name="Grossmann J."/>
            <person name="Gruissem W."/>
            <person name="Baginsky S."/>
        </authorList>
    </citation>
    <scope>IDENTIFICATION BY MASS SPECTROMETRY [LARGE SCALE ANALYSIS]</scope>
</reference>
<reference key="10">
    <citation type="journal article" date="2012" name="Cell Res.">
        <title>Isolation and proteomic analysis of the SYP61 compartment reveal its role in exocytic trafficking in Arabidopsis.</title>
        <authorList>
            <person name="Drakakaki G."/>
            <person name="van de Ven W."/>
            <person name="Pan S."/>
            <person name="Miao Y."/>
            <person name="Wang J."/>
            <person name="Keinath N.F."/>
            <person name="Weatherly B."/>
            <person name="Jiang L."/>
            <person name="Schumacher K."/>
            <person name="Hicks G."/>
            <person name="Raikhel N."/>
        </authorList>
    </citation>
    <scope>SUBUNIT</scope>
    <scope>SUBCELLULAR LOCATION</scope>
    <source>
        <strain>cv. Columbia</strain>
    </source>
</reference>
<reference key="11">
    <citation type="journal article" date="2012" name="Mol. Cell. Proteomics">
        <title>Comparative large-scale characterisation of plant vs. mammal proteins reveals similar and idiosyncratic N-alpha acetylation features.</title>
        <authorList>
            <person name="Bienvenut W.V."/>
            <person name="Sumpton D."/>
            <person name="Martinez A."/>
            <person name="Lilla S."/>
            <person name="Espagne C."/>
            <person name="Meinnel T."/>
            <person name="Giglione C."/>
        </authorList>
    </citation>
    <scope>ACETYLATION [LARGE SCALE ANALYSIS] AT MET-1</scope>
    <scope>ACETYLATION [LARGE SCALE ANALYSIS] AT ALA-2 (ISOFORM 2)</scope>
    <scope>CLEAVAGE OF INITIATOR METHIONINE [LARGE SCALE ANALYSIS] (ISOFORM 2)</scope>
    <scope>IDENTIFICATION BY MASS SPECTROMETRY [LARGE SCALE ANALYSIS]</scope>
</reference>
<reference key="12">
    <citation type="journal article" date="2014" name="Plant Cell">
        <title>Arabidopsis SNAREs SYP61 and SYP121 coordinate the trafficking of plasma membrane aquaporin PIP2;7 to modulate the cell membrane water permeability.</title>
        <authorList>
            <person name="Hachez C."/>
            <person name="Laloux T."/>
            <person name="Reinhardt H."/>
            <person name="Cavez D."/>
            <person name="Degand H."/>
            <person name="Grefen C."/>
            <person name="De Rycke R."/>
            <person name="Inze D."/>
            <person name="Blatt M.R."/>
            <person name="Russinova E."/>
            <person name="Chaumont F."/>
        </authorList>
    </citation>
    <scope>FUNCTION</scope>
    <scope>DISRUPTION PHENOTYPE</scope>
    <scope>INTERACTION WITH SYP61 AND PIP2-7</scope>
    <scope>SUBCELLULAR LOCATION</scope>
</reference>
<gene>
    <name evidence="10" type="primary">SYP121</name>
    <name evidence="11" type="synonym">SYR1</name>
    <name evidence="13" type="ordered locus">At3g11820</name>
    <name evidence="14" type="ORF">F26K24.11</name>
</gene>
<dbReference type="EMBL" id="AF112864">
    <property type="protein sequence ID" value="AAD11809.1"/>
    <property type="molecule type" value="mRNA"/>
</dbReference>
<dbReference type="EMBL" id="AC016795">
    <property type="protein sequence ID" value="AAF23198.1"/>
    <property type="molecule type" value="Genomic_DNA"/>
</dbReference>
<dbReference type="EMBL" id="CP002686">
    <property type="protein sequence ID" value="AEE75102.1"/>
    <property type="molecule type" value="Genomic_DNA"/>
</dbReference>
<dbReference type="EMBL" id="CP002686">
    <property type="protein sequence ID" value="AEE75103.1"/>
    <property type="molecule type" value="Genomic_DNA"/>
</dbReference>
<dbReference type="EMBL" id="AY093151">
    <property type="protein sequence ID" value="AAM13150.1"/>
    <property type="molecule type" value="mRNA"/>
</dbReference>
<dbReference type="EMBL" id="BT003393">
    <property type="protein sequence ID" value="AAO30056.1"/>
    <property type="molecule type" value="mRNA"/>
</dbReference>
<dbReference type="EMBL" id="AY087842">
    <property type="protein sequence ID" value="AAM65395.1"/>
    <property type="molecule type" value="mRNA"/>
</dbReference>
<dbReference type="RefSeq" id="NP_187788.1">
    <molecule id="Q9ZSD4-1"/>
    <property type="nucleotide sequence ID" value="NM_112015.3"/>
</dbReference>
<dbReference type="RefSeq" id="NP_974288.1">
    <molecule id="Q9ZSD4-2"/>
    <property type="nucleotide sequence ID" value="NM_202559.3"/>
</dbReference>
<dbReference type="SMR" id="Q9ZSD4"/>
<dbReference type="BioGRID" id="5689">
    <property type="interactions" value="69"/>
</dbReference>
<dbReference type="DIP" id="DIP-59829N"/>
<dbReference type="FunCoup" id="Q9ZSD4">
    <property type="interactions" value="1210"/>
</dbReference>
<dbReference type="IntAct" id="Q9ZSD4">
    <property type="interactions" value="60"/>
</dbReference>
<dbReference type="STRING" id="3702.Q9ZSD4"/>
<dbReference type="TCDB" id="8.A.91.1.7">
    <property type="family name" value="the syntaxin (syntaxin) family"/>
</dbReference>
<dbReference type="iPTMnet" id="Q9ZSD4"/>
<dbReference type="SwissPalm" id="Q9ZSD4"/>
<dbReference type="PaxDb" id="3702-AT3G11820.1"/>
<dbReference type="ProteomicsDB" id="226782">
    <molecule id="Q9ZSD4-1"/>
</dbReference>
<dbReference type="EnsemblPlants" id="AT3G11820.1">
    <molecule id="Q9ZSD4-1"/>
    <property type="protein sequence ID" value="AT3G11820.1"/>
    <property type="gene ID" value="AT3G11820"/>
</dbReference>
<dbReference type="EnsemblPlants" id="AT3G11820.2">
    <molecule id="Q9ZSD4-2"/>
    <property type="protein sequence ID" value="AT3G11820.2"/>
    <property type="gene ID" value="AT3G11820"/>
</dbReference>
<dbReference type="GeneID" id="820355"/>
<dbReference type="Gramene" id="AT3G11820.1">
    <molecule id="Q9ZSD4-1"/>
    <property type="protein sequence ID" value="AT3G11820.1"/>
    <property type="gene ID" value="AT3G11820"/>
</dbReference>
<dbReference type="Gramene" id="AT3G11820.2">
    <molecule id="Q9ZSD4-2"/>
    <property type="protein sequence ID" value="AT3G11820.2"/>
    <property type="gene ID" value="AT3G11820"/>
</dbReference>
<dbReference type="KEGG" id="ath:AT3G11820"/>
<dbReference type="Araport" id="AT3G11820"/>
<dbReference type="TAIR" id="AT3G11820">
    <property type="gene designation" value="SYP121"/>
</dbReference>
<dbReference type="eggNOG" id="KOG0810">
    <property type="taxonomic scope" value="Eukaryota"/>
</dbReference>
<dbReference type="InParanoid" id="Q9ZSD4"/>
<dbReference type="OrthoDB" id="10255013at2759"/>
<dbReference type="PhylomeDB" id="Q9ZSD4"/>
<dbReference type="PRO" id="PR:Q9ZSD4"/>
<dbReference type="Proteomes" id="UP000006548">
    <property type="component" value="Chromosome 3"/>
</dbReference>
<dbReference type="ExpressionAtlas" id="Q9ZSD4">
    <property type="expression patterns" value="baseline and differential"/>
</dbReference>
<dbReference type="GO" id="GO:0009504">
    <property type="term" value="C:cell plate"/>
    <property type="evidence" value="ECO:0000314"/>
    <property type="project" value="TAIR"/>
</dbReference>
<dbReference type="GO" id="GO:0005829">
    <property type="term" value="C:cytosol"/>
    <property type="evidence" value="ECO:0007005"/>
    <property type="project" value="TAIR"/>
</dbReference>
<dbReference type="GO" id="GO:0005886">
    <property type="term" value="C:plasma membrane"/>
    <property type="evidence" value="ECO:0000314"/>
    <property type="project" value="TAIR"/>
</dbReference>
<dbReference type="GO" id="GO:0009506">
    <property type="term" value="C:plasmodesma"/>
    <property type="evidence" value="ECO:0007005"/>
    <property type="project" value="TAIR"/>
</dbReference>
<dbReference type="GO" id="GO:0031201">
    <property type="term" value="C:SNARE complex"/>
    <property type="evidence" value="ECO:0000314"/>
    <property type="project" value="UniProtKB"/>
</dbReference>
<dbReference type="GO" id="GO:0005802">
    <property type="term" value="C:trans-Golgi network"/>
    <property type="evidence" value="ECO:0000314"/>
    <property type="project" value="TAIR"/>
</dbReference>
<dbReference type="GO" id="GO:0043495">
    <property type="term" value="F:protein-membrane adaptor activity"/>
    <property type="evidence" value="ECO:0000314"/>
    <property type="project" value="TAIR"/>
</dbReference>
<dbReference type="GO" id="GO:0005484">
    <property type="term" value="F:SNAP receptor activity"/>
    <property type="evidence" value="ECO:0007669"/>
    <property type="project" value="InterPro"/>
</dbReference>
<dbReference type="GO" id="GO:0006952">
    <property type="term" value="P:defense response"/>
    <property type="evidence" value="ECO:0000304"/>
    <property type="project" value="TAIR"/>
</dbReference>
<dbReference type="GO" id="GO:0050832">
    <property type="term" value="P:defense response to fungus"/>
    <property type="evidence" value="ECO:0000316"/>
    <property type="project" value="TAIR"/>
</dbReference>
<dbReference type="GO" id="GO:0006886">
    <property type="term" value="P:intracellular protein transport"/>
    <property type="evidence" value="ECO:0000314"/>
    <property type="project" value="UniProtKB"/>
</dbReference>
<dbReference type="GO" id="GO:0072660">
    <property type="term" value="P:maintenance of protein location in plasma membrane"/>
    <property type="evidence" value="ECO:0000315"/>
    <property type="project" value="TAIR"/>
</dbReference>
<dbReference type="GO" id="GO:0031348">
    <property type="term" value="P:negative regulation of defense response"/>
    <property type="evidence" value="ECO:0000315"/>
    <property type="project" value="TAIR"/>
</dbReference>
<dbReference type="GO" id="GO:0072659">
    <property type="term" value="P:protein localization to plasma membrane"/>
    <property type="evidence" value="ECO:0000315"/>
    <property type="project" value="TAIR"/>
</dbReference>
<dbReference type="GO" id="GO:0006612">
    <property type="term" value="P:protein targeting to membrane"/>
    <property type="evidence" value="ECO:0000314"/>
    <property type="project" value="TAIR"/>
</dbReference>
<dbReference type="GO" id="GO:0010119">
    <property type="term" value="P:regulation of stomatal movement"/>
    <property type="evidence" value="ECO:0000315"/>
    <property type="project" value="TAIR"/>
</dbReference>
<dbReference type="GO" id="GO:0009737">
    <property type="term" value="P:response to abscisic acid"/>
    <property type="evidence" value="ECO:0000270"/>
    <property type="project" value="TAIR"/>
</dbReference>
<dbReference type="GO" id="GO:0009620">
    <property type="term" value="P:response to fungus"/>
    <property type="evidence" value="ECO:0000315"/>
    <property type="project" value="TAIR"/>
</dbReference>
<dbReference type="GO" id="GO:0032940">
    <property type="term" value="P:secretion by cell"/>
    <property type="evidence" value="ECO:0000314"/>
    <property type="project" value="TAIR"/>
</dbReference>
<dbReference type="GO" id="GO:0010148">
    <property type="term" value="P:transpiration"/>
    <property type="evidence" value="ECO:0000315"/>
    <property type="project" value="TAIR"/>
</dbReference>
<dbReference type="GO" id="GO:0016192">
    <property type="term" value="P:vesicle-mediated transport"/>
    <property type="evidence" value="ECO:0000315"/>
    <property type="project" value="TAIR"/>
</dbReference>
<dbReference type="CDD" id="cd15848">
    <property type="entry name" value="SNARE_syntaxin1-like"/>
    <property type="match status" value="1"/>
</dbReference>
<dbReference type="CDD" id="cd00179">
    <property type="entry name" value="SynN"/>
    <property type="match status" value="1"/>
</dbReference>
<dbReference type="FunFam" id="1.20.58.70:FF:000003">
    <property type="entry name" value="Qa-SNARE, Sso1/Syntaxin1-type, SYP12A-group"/>
    <property type="match status" value="1"/>
</dbReference>
<dbReference type="FunFam" id="1.20.5.110:FF:000008">
    <property type="entry name" value="Syntaxin 132"/>
    <property type="match status" value="1"/>
</dbReference>
<dbReference type="Gene3D" id="1.20.5.110">
    <property type="match status" value="1"/>
</dbReference>
<dbReference type="Gene3D" id="1.20.58.70">
    <property type="match status" value="1"/>
</dbReference>
<dbReference type="InterPro" id="IPR010989">
    <property type="entry name" value="SNARE"/>
</dbReference>
<dbReference type="InterPro" id="IPR045242">
    <property type="entry name" value="Syntaxin"/>
</dbReference>
<dbReference type="InterPro" id="IPR006012">
    <property type="entry name" value="Syntaxin/epimorphin_CS"/>
</dbReference>
<dbReference type="InterPro" id="IPR006011">
    <property type="entry name" value="Syntaxin_N"/>
</dbReference>
<dbReference type="InterPro" id="IPR000727">
    <property type="entry name" value="T_SNARE_dom"/>
</dbReference>
<dbReference type="PANTHER" id="PTHR19957">
    <property type="entry name" value="SYNTAXIN"/>
    <property type="match status" value="1"/>
</dbReference>
<dbReference type="PANTHER" id="PTHR19957:SF80">
    <property type="entry name" value="SYNTAXIN-121"/>
    <property type="match status" value="1"/>
</dbReference>
<dbReference type="Pfam" id="PF05739">
    <property type="entry name" value="SNARE"/>
    <property type="match status" value="1"/>
</dbReference>
<dbReference type="Pfam" id="PF00804">
    <property type="entry name" value="Syntaxin"/>
    <property type="match status" value="1"/>
</dbReference>
<dbReference type="SMART" id="SM00503">
    <property type="entry name" value="SynN"/>
    <property type="match status" value="1"/>
</dbReference>
<dbReference type="SMART" id="SM00397">
    <property type="entry name" value="t_SNARE"/>
    <property type="match status" value="1"/>
</dbReference>
<dbReference type="SUPFAM" id="SSF47661">
    <property type="entry name" value="t-snare proteins"/>
    <property type="match status" value="1"/>
</dbReference>
<dbReference type="PROSITE" id="PS00914">
    <property type="entry name" value="SYNTAXIN"/>
    <property type="match status" value="1"/>
</dbReference>
<dbReference type="PROSITE" id="PS50192">
    <property type="entry name" value="T_SNARE"/>
    <property type="match status" value="1"/>
</dbReference>
<protein>
    <recommendedName>
        <fullName evidence="10">Syntaxin-121</fullName>
        <shortName evidence="10">AtSYP121</shortName>
    </recommendedName>
    <alternativeName>
        <fullName evidence="10">Protein SYNTAXIN OF PLANTS 121</fullName>
    </alternativeName>
    <alternativeName>
        <fullName evidence="11">Syntaxin-related protein At-Syr1</fullName>
    </alternativeName>
</protein>
<proteinExistence type="evidence at protein level"/>
<evidence type="ECO:0000250" key="1">
    <source>
        <dbReference type="UniProtKB" id="Q946Y7"/>
    </source>
</evidence>
<evidence type="ECO:0000255" key="2"/>
<evidence type="ECO:0000255" key="3">
    <source>
        <dbReference type="PROSITE-ProRule" id="PRU00202"/>
    </source>
</evidence>
<evidence type="ECO:0000256" key="4">
    <source>
        <dbReference type="SAM" id="MobiDB-lite"/>
    </source>
</evidence>
<evidence type="ECO:0000269" key="5">
    <source>
    </source>
</evidence>
<evidence type="ECO:0000269" key="6">
    <source>
    </source>
</evidence>
<evidence type="ECO:0000269" key="7">
    <source>
    </source>
</evidence>
<evidence type="ECO:0000269" key="8">
    <source>
    </source>
</evidence>
<evidence type="ECO:0000269" key="9">
    <source>
    </source>
</evidence>
<evidence type="ECO:0000303" key="10">
    <source>
    </source>
</evidence>
<evidence type="ECO:0000303" key="11">
    <source>
    </source>
</evidence>
<evidence type="ECO:0000305" key="12"/>
<evidence type="ECO:0000312" key="13">
    <source>
        <dbReference type="Araport" id="AT3G11820"/>
    </source>
</evidence>
<evidence type="ECO:0000312" key="14">
    <source>
        <dbReference type="EMBL" id="AAF23198.1"/>
    </source>
</evidence>
<evidence type="ECO:0007744" key="15">
    <source>
    </source>
</evidence>
<keyword id="KW-0007">Acetylation</keyword>
<keyword id="KW-0024">Alternative initiation</keyword>
<keyword id="KW-1003">Cell membrane</keyword>
<keyword id="KW-0175">Coiled coil</keyword>
<keyword id="KW-0333">Golgi apparatus</keyword>
<keyword id="KW-0472">Membrane</keyword>
<keyword id="KW-0653">Protein transport</keyword>
<keyword id="KW-1185">Reference proteome</keyword>
<keyword id="KW-0812">Transmembrane</keyword>
<keyword id="KW-1133">Transmembrane helix</keyword>
<keyword id="KW-0813">Transport</keyword>
<name>SY121_ARATH</name>
<sequence length="346" mass="37957">MNDLFSSSFSRFRSGEPSPRRDVAGGGDGVQMANPAGSTGGVNLDKFFEDVESVKEELKELDRLNETLSSCHEQSKTLHNAKAVKDLRSKMDGDVGVALKKAKMIKVKLEALDRANAANRSLPGCGPGSSSDRTRTSVLNGLRKKLMDSMDSFNRLRELISSEYRETVQRRYFTVTGENPDERTLDRLISTGESERFLQKAIQEQGRGRVLDTINEIQERHDAVKDIEKNLRELHQVFLDMAVLVEHQGAQLDDIESHVGRASSFIRGGTDQLQTARVYQKNTRKWTCIAIIILIIIITVVVLAVLKPWNNSSGGGGGGGGGGTTGGSQPNSGTPPNPPQARRLLR</sequence>
<comment type="function">
    <text evidence="1 9">Vesicle trafficking protein that functions in the secretory pathway (By similarity). Together with SYP61, regulates the post-Golgi trafficking of the aquaporin PIP2-7 to the plasma membrane, thus modulating cell membrane water permeability (PubMed:25082856).</text>
</comment>
<comment type="subunit">
    <text evidence="5 8 9">Part of the t-SNARE complex (PubMed:11718726, PubMed:21826108). Binds to SNAP33 (PubMed:11718726). Colocalizes with SYP61 and PIP2-7 in trafficking vesicles and at the plasma membrane (PubMed:25082856). Interacts with SYP61 and PIP2-7 (PubMed:25082856).</text>
</comment>
<comment type="interaction">
    <interactant intactId="EBI-4476863">
        <id>Q9ZSD4</id>
    </interactant>
    <interactant intactId="EBI-603017">
        <id>Q9S7P9</id>
        <label>SNAP33</label>
    </interactant>
    <organismsDiffer>false</organismsDiffer>
    <experiments>4</experiments>
</comment>
<comment type="subcellular location">
    <subcellularLocation>
        <location evidence="6 7 9">Cell membrane</location>
        <topology evidence="2">Single-pass type IV membrane protein</topology>
    </subcellularLocation>
    <subcellularLocation>
        <location evidence="7 8 9">Golgi apparatus</location>
        <location evidence="7 8 9">trans-Golgi network membrane</location>
        <topology evidence="2">Single-pass type IV membrane protein</topology>
    </subcellularLocation>
</comment>
<comment type="alternative products">
    <event type="alternative initiation"/>
    <isoform>
        <id>Q9ZSD4-1</id>
        <name>1</name>
        <sequence type="displayed"/>
    </isoform>
    <isoform>
        <id>Q9ZSD4-2</id>
        <name>2</name>
        <sequence type="described" ref="VSP_057947"/>
    </isoform>
</comment>
<comment type="tissue specificity">
    <text evidence="7">Expressed at low levels in roots, stems, flowers and leaves.</text>
</comment>
<comment type="induction">
    <text>Ninefold induction within 30-min exposure to abscisic acid and after 48 hours drought stress.</text>
</comment>
<comment type="disruption phenotype">
    <text evidence="9">Abnormal PIP proteins (e.g. PIP1-4, PIP2-1 and PIP2-7) trafficking and subcellular localization leading to a reduced levels at the plasma membrane.</text>
</comment>
<comment type="similarity">
    <text evidence="12">Belongs to the syntaxin family.</text>
</comment>